<protein>
    <recommendedName>
        <fullName evidence="1">DNA polymerase sliding clamp 1</fullName>
    </recommendedName>
    <alternativeName>
        <fullName evidence="1">Proliferating cell nuclear antigen homolog 1</fullName>
        <shortName evidence="1">PCNA 1</shortName>
    </alternativeName>
</protein>
<feature type="chain" id="PRO_0000149204" description="DNA polymerase sliding clamp 1">
    <location>
        <begin position="1"/>
        <end position="249"/>
    </location>
</feature>
<dbReference type="EMBL" id="AY026765">
    <property type="protein sequence ID" value="AAK13025.1"/>
    <property type="molecule type" value="Genomic_DNA"/>
</dbReference>
<dbReference type="EMBL" id="AE009441">
    <property type="protein sequence ID" value="AAL64629.1"/>
    <property type="molecule type" value="Genomic_DNA"/>
</dbReference>
<dbReference type="RefSeq" id="WP_011009097.1">
    <property type="nucleotide sequence ID" value="NC_003364.1"/>
</dbReference>
<dbReference type="SMR" id="Q8ZTY0"/>
<dbReference type="FunCoup" id="Q8ZTY0">
    <property type="interactions" value="168"/>
</dbReference>
<dbReference type="STRING" id="178306.PAE3038"/>
<dbReference type="EnsemblBacteria" id="AAL64629">
    <property type="protein sequence ID" value="AAL64629"/>
    <property type="gene ID" value="PAE3038"/>
</dbReference>
<dbReference type="GeneID" id="1463798"/>
<dbReference type="KEGG" id="pai:PAE3038"/>
<dbReference type="PATRIC" id="fig|178306.9.peg.2286"/>
<dbReference type="eggNOG" id="arCOG00488">
    <property type="taxonomic scope" value="Archaea"/>
</dbReference>
<dbReference type="HOGENOM" id="CLU_043978_1_0_2"/>
<dbReference type="InParanoid" id="Q8ZTY0"/>
<dbReference type="Proteomes" id="UP000002439">
    <property type="component" value="Chromosome"/>
</dbReference>
<dbReference type="GO" id="GO:0003677">
    <property type="term" value="F:DNA binding"/>
    <property type="evidence" value="ECO:0007669"/>
    <property type="project" value="UniProtKB-UniRule"/>
</dbReference>
<dbReference type="GO" id="GO:0030337">
    <property type="term" value="F:DNA polymerase processivity factor activity"/>
    <property type="evidence" value="ECO:0000318"/>
    <property type="project" value="GO_Central"/>
</dbReference>
<dbReference type="GO" id="GO:0006272">
    <property type="term" value="P:leading strand elongation"/>
    <property type="evidence" value="ECO:0000318"/>
    <property type="project" value="GO_Central"/>
</dbReference>
<dbReference type="GO" id="GO:0006275">
    <property type="term" value="P:regulation of DNA replication"/>
    <property type="evidence" value="ECO:0007669"/>
    <property type="project" value="UniProtKB-UniRule"/>
</dbReference>
<dbReference type="CDD" id="cd00577">
    <property type="entry name" value="PCNA"/>
    <property type="match status" value="1"/>
</dbReference>
<dbReference type="Gene3D" id="3.70.10.10">
    <property type="match status" value="1"/>
</dbReference>
<dbReference type="HAMAP" id="MF_00317">
    <property type="entry name" value="DNApol_clamp_arch"/>
    <property type="match status" value="1"/>
</dbReference>
<dbReference type="InterPro" id="IPR046938">
    <property type="entry name" value="DNA_clamp_sf"/>
</dbReference>
<dbReference type="InterPro" id="IPR000730">
    <property type="entry name" value="Pr_cel_nuc_antig"/>
</dbReference>
<dbReference type="InterPro" id="IPR022649">
    <property type="entry name" value="Pr_cel_nuc_antig_C"/>
</dbReference>
<dbReference type="InterPro" id="IPR022659">
    <property type="entry name" value="Pr_cel_nuc_antig_CS"/>
</dbReference>
<dbReference type="InterPro" id="IPR022648">
    <property type="entry name" value="Pr_cel_nuc_antig_N"/>
</dbReference>
<dbReference type="NCBIfam" id="TIGR00590">
    <property type="entry name" value="pcna"/>
    <property type="match status" value="1"/>
</dbReference>
<dbReference type="NCBIfam" id="NF002221">
    <property type="entry name" value="PRK01115.1-4"/>
    <property type="match status" value="1"/>
</dbReference>
<dbReference type="PANTHER" id="PTHR11352">
    <property type="entry name" value="PROLIFERATING CELL NUCLEAR ANTIGEN"/>
    <property type="match status" value="1"/>
</dbReference>
<dbReference type="PANTHER" id="PTHR11352:SF0">
    <property type="entry name" value="PROLIFERATING CELL NUCLEAR ANTIGEN"/>
    <property type="match status" value="1"/>
</dbReference>
<dbReference type="Pfam" id="PF02747">
    <property type="entry name" value="PCNA_C"/>
    <property type="match status" value="1"/>
</dbReference>
<dbReference type="Pfam" id="PF00705">
    <property type="entry name" value="PCNA_N"/>
    <property type="match status" value="1"/>
</dbReference>
<dbReference type="PRINTS" id="PR00339">
    <property type="entry name" value="PCNACYCLIN"/>
</dbReference>
<dbReference type="SUPFAM" id="SSF55979">
    <property type="entry name" value="DNA clamp"/>
    <property type="match status" value="2"/>
</dbReference>
<dbReference type="PROSITE" id="PS01251">
    <property type="entry name" value="PCNA_1"/>
    <property type="match status" value="1"/>
</dbReference>
<proteinExistence type="inferred from homology"/>
<evidence type="ECO:0000255" key="1">
    <source>
        <dbReference type="HAMAP-Rule" id="MF_00317"/>
    </source>
</evidence>
<accession>Q8ZTY0</accession>
<gene>
    <name evidence="1" type="primary">pcn1</name>
    <name type="ordered locus">PAE3038</name>
</gene>
<comment type="function">
    <text evidence="1">Sliding clamp subunit that acts as a moving platform for DNA processing. Responsible for tethering the catalytic subunit of DNA polymerase and other proteins to DNA during high-speed replication.</text>
</comment>
<comment type="subunit">
    <text evidence="1">Homotrimer. The subunits circularize to form a toroid; DNA passes through its center. Replication factor C (RFC) is required to load the toroid on the DNA.</text>
</comment>
<comment type="similarity">
    <text evidence="1">Belongs to the PCNA family.</text>
</comment>
<reference key="1">
    <citation type="journal article" date="2001" name="J. Mol. Biol.">
        <title>Leaderless transcripts of the crenarchaeal hyperthermophile Pyrobaculum aerophilum.</title>
        <authorList>
            <person name="Slupska M.M."/>
            <person name="King A.G."/>
            <person name="Fitz-Gibbon S."/>
            <person name="Besemer J."/>
            <person name="Borodovsky M."/>
            <person name="Miller J.H."/>
        </authorList>
    </citation>
    <scope>NUCLEOTIDE SEQUENCE [GENOMIC DNA]</scope>
    <source>
        <strain>ATCC 51768 / DSM 7523 / JCM 9630 / CIP 104966 / NBRC 100827 / IM2</strain>
    </source>
</reference>
<reference key="2">
    <citation type="journal article" date="2002" name="Proc. Natl. Acad. Sci. U.S.A.">
        <title>Genome sequence of the hyperthermophilic crenarchaeon Pyrobaculum aerophilum.</title>
        <authorList>
            <person name="Fitz-Gibbon S.T."/>
            <person name="Ladner H."/>
            <person name="Kim U.-J."/>
            <person name="Stetter K.O."/>
            <person name="Simon M.I."/>
            <person name="Miller J.H."/>
        </authorList>
    </citation>
    <scope>NUCLEOTIDE SEQUENCE [LARGE SCALE GENOMIC DNA]</scope>
    <source>
        <strain>ATCC 51768 / DSM 7523 / JCM 9630 / CIP 104966 / NBRC 100827 / IM2</strain>
    </source>
</reference>
<sequence length="249" mass="27696">MAKQVLTYIDAKEFAYIIDSISVLVEEANFLIRNDGLYLRALDVSRTAMVDLAIPKESFEEFPEVEELRFGLNFKELKKLLRRVKKGDKISMEFEEGRVRIKLIGKSVRSIVVPSIEVVGEELPTPKVVYTAMVKAASDVLATAVKDADAVADEVKFEASEEALIISASSDKGEVEVKLDKNSELVYEFDVKEPASARFSLEYLVDITSKTSKISDIVTIELATAKPIYLSFDIPAGGKISYFIAPRVE</sequence>
<name>PCNA1_PYRAE</name>
<organism>
    <name type="scientific">Pyrobaculum aerophilum (strain ATCC 51768 / DSM 7523 / JCM 9630 / CIP 104966 / NBRC 100827 / IM2)</name>
    <dbReference type="NCBI Taxonomy" id="178306"/>
    <lineage>
        <taxon>Archaea</taxon>
        <taxon>Thermoproteota</taxon>
        <taxon>Thermoprotei</taxon>
        <taxon>Thermoproteales</taxon>
        <taxon>Thermoproteaceae</taxon>
        <taxon>Pyrobaculum</taxon>
    </lineage>
</organism>
<keyword id="KW-0235">DNA replication</keyword>
<keyword id="KW-0238">DNA-binding</keyword>
<keyword id="KW-1185">Reference proteome</keyword>